<protein>
    <recommendedName>
        <fullName>Endoglucanase</fullName>
        <ecNumber>3.2.1.4</ecNumber>
    </recommendedName>
    <alternativeName>
        <fullName>Cellulase</fullName>
    </alternativeName>
    <alternativeName>
        <fullName>Endo-1,4-beta-glucanase</fullName>
    </alternativeName>
</protein>
<keyword id="KW-0119">Carbohydrate metabolism</keyword>
<keyword id="KW-0136">Cellulose degradation</keyword>
<keyword id="KW-0222">Digestion</keyword>
<keyword id="KW-0325">Glycoprotein</keyword>
<keyword id="KW-0326">Glycosidase</keyword>
<keyword id="KW-0378">Hydrolase</keyword>
<keyword id="KW-0624">Polysaccharide degradation</keyword>
<keyword id="KW-0964">Secreted</keyword>
<keyword id="KW-0732">Signal</keyword>
<dbReference type="EC" id="3.2.1.4"/>
<dbReference type="EMBL" id="Y17907">
    <property type="protein sequence ID" value="CAA76931.1"/>
    <property type="molecule type" value="mRNA"/>
</dbReference>
<dbReference type="SMR" id="O97401"/>
<dbReference type="CAZy" id="GH45">
    <property type="family name" value="Glycoside Hydrolase Family 45"/>
</dbReference>
<dbReference type="OrthoDB" id="10035502at2759"/>
<dbReference type="GO" id="GO:0005576">
    <property type="term" value="C:extracellular region"/>
    <property type="evidence" value="ECO:0007669"/>
    <property type="project" value="UniProtKB-SubCell"/>
</dbReference>
<dbReference type="GO" id="GO:0008810">
    <property type="term" value="F:cellulase activity"/>
    <property type="evidence" value="ECO:0007669"/>
    <property type="project" value="UniProtKB-EC"/>
</dbReference>
<dbReference type="GO" id="GO:0030245">
    <property type="term" value="P:cellulose catabolic process"/>
    <property type="evidence" value="ECO:0007669"/>
    <property type="project" value="UniProtKB-KW"/>
</dbReference>
<dbReference type="GO" id="GO:0007586">
    <property type="term" value="P:digestion"/>
    <property type="evidence" value="ECO:0007669"/>
    <property type="project" value="UniProtKB-KW"/>
</dbReference>
<dbReference type="Gene3D" id="2.40.40.10">
    <property type="entry name" value="RlpA-like domain"/>
    <property type="match status" value="1"/>
</dbReference>
<dbReference type="InterPro" id="IPR052288">
    <property type="entry name" value="GH45_Enzymes"/>
</dbReference>
<dbReference type="InterPro" id="IPR000334">
    <property type="entry name" value="Glyco_hydro_45"/>
</dbReference>
<dbReference type="InterPro" id="IPR036908">
    <property type="entry name" value="RlpA-like_sf"/>
</dbReference>
<dbReference type="PANTHER" id="PTHR39730">
    <property type="entry name" value="ENDOGLUCANASE 1"/>
    <property type="match status" value="1"/>
</dbReference>
<dbReference type="PANTHER" id="PTHR39730:SF1">
    <property type="entry name" value="ENDOGLUCANASE 1"/>
    <property type="match status" value="1"/>
</dbReference>
<dbReference type="Pfam" id="PF02015">
    <property type="entry name" value="Glyco_hydro_45"/>
    <property type="match status" value="1"/>
</dbReference>
<dbReference type="SUPFAM" id="SSF50685">
    <property type="entry name" value="Barwin-like endoglucanases"/>
    <property type="match status" value="1"/>
</dbReference>
<dbReference type="PROSITE" id="PS01140">
    <property type="entry name" value="GLYCOSYL_HYDROL_F45"/>
    <property type="match status" value="1"/>
</dbReference>
<reference evidence="5 6" key="1">
    <citation type="journal article" date="1999" name="Insect Biochem. Mol. Biol.">
        <title>Molecular cloning of cDNAs encoding a range of digestive enzymes from a phytophagous beetle, Phaedon cochleariae.</title>
        <authorList>
            <person name="Girard C."/>
            <person name="Jouanin L."/>
        </authorList>
    </citation>
    <scope>NUCLEOTIDE SEQUENCE [MRNA]</scope>
    <scope>TISSUE SPECIFICITY</scope>
    <scope>DEVELOPMENTAL STAGE</scope>
    <source>
        <tissue evidence="4">Larval gut</tissue>
    </source>
</reference>
<proteinExistence type="evidence at transcript level"/>
<sequence>MQVIVLPLVFLATFATSGSLAAPDASPEIVPVDGGLSGYGTTTRYWDCCKPSCAWKENINTPTMTPVQTCAIDGNTVVNASVQSGCIGGSSYMCSNQQAFVVNSTLAFGFAAGSFTGGVDNNLCCSCMLLTFQGQLAGKQFLVQITNTGGDLGSTSSIWPFPGGGVGIFTQGCHDQWTPRGAAGGDQYGGVYSVEQCSDLPEVLQPGCRFRFEFLENVSNPQVSFQQVQCPAEIVAISNCAL</sequence>
<name>GUN_PHACE</name>
<evidence type="ECO:0000250" key="1">
    <source>
        <dbReference type="UniProtKB" id="P43316"/>
    </source>
</evidence>
<evidence type="ECO:0000255" key="2"/>
<evidence type="ECO:0000255" key="3">
    <source>
        <dbReference type="PROSITE-ProRule" id="PRU10069"/>
    </source>
</evidence>
<evidence type="ECO:0000269" key="4">
    <source>
    </source>
</evidence>
<evidence type="ECO:0000305" key="5"/>
<evidence type="ECO:0000312" key="6">
    <source>
        <dbReference type="EMBL" id="CAA76931.1"/>
    </source>
</evidence>
<accession>O97401</accession>
<accession>P81522</accession>
<comment type="catalytic activity">
    <reaction>
        <text>Endohydrolysis of (1-&gt;4)-beta-D-glucosidic linkages in cellulose, lichenin and cereal beta-D-glucans.</text>
        <dbReference type="EC" id="3.2.1.4"/>
    </reaction>
</comment>
<comment type="subcellular location">
    <subcellularLocation>
        <location evidence="5">Secreted</location>
    </subcellularLocation>
</comment>
<comment type="tissue specificity">
    <text evidence="4">Expressed in larval carcasses and gut, and adult gut.</text>
</comment>
<comment type="developmental stage">
    <text evidence="4">Eggs, larvae and adult.</text>
</comment>
<comment type="similarity">
    <text evidence="2">Belongs to the glycosyl hydrolase 45 (cellulase K) family.</text>
</comment>
<feature type="signal peptide" evidence="2">
    <location>
        <begin position="1"/>
        <end position="21"/>
    </location>
</feature>
<feature type="chain" id="PRO_5000147329" description="Endoglucanase" evidence="2">
    <location>
        <begin position="22"/>
        <end position="242"/>
    </location>
</feature>
<feature type="active site" description="Nucleophile" evidence="1 3">
    <location>
        <position position="47"/>
    </location>
</feature>
<feature type="glycosylation site" description="N-linked (GlcNAc...) asparagine" evidence="2">
    <location>
        <position position="79"/>
    </location>
</feature>
<feature type="glycosylation site" description="N-linked (GlcNAc...) asparagine" evidence="2">
    <location>
        <position position="103"/>
    </location>
</feature>
<feature type="glycosylation site" description="N-linked (GlcNAc...) asparagine" evidence="2">
    <location>
        <position position="217"/>
    </location>
</feature>
<organism>
    <name type="scientific">Phaedon cochleariae</name>
    <name type="common">Mustard beetle</name>
    <dbReference type="NCBI Taxonomy" id="80249"/>
    <lineage>
        <taxon>Eukaryota</taxon>
        <taxon>Metazoa</taxon>
        <taxon>Ecdysozoa</taxon>
        <taxon>Arthropoda</taxon>
        <taxon>Hexapoda</taxon>
        <taxon>Insecta</taxon>
        <taxon>Pterygota</taxon>
        <taxon>Neoptera</taxon>
        <taxon>Endopterygota</taxon>
        <taxon>Coleoptera</taxon>
        <taxon>Polyphaga</taxon>
        <taxon>Cucujiformia</taxon>
        <taxon>Chrysomeloidea</taxon>
        <taxon>Chrysomelidae</taxon>
        <taxon>Chrysomelinae</taxon>
        <taxon>Chrysomelini</taxon>
        <taxon>Phaedon</taxon>
    </lineage>
</organism>